<sequence length="609" mass="69006">MEMIRIFLIYLILKIIIINGENNEYSKGYGVGIVFPGSKCLNYVGDSIGQPLCNNRLFNGGKKIYSTVTLVDNKNISSQELSKIEILKSFEALTFLQDQCDDLLFTQFGLCDLNFSPCVETIPKITPLQNVSLPQRLCKSVCERMVSNCPRLSLKIDCSISFLFPEIGTEYNLTLYGYTENKGLYKVPCIDPTDGYNNISNQMELIQACPYPLLLKNSSDPKYSPNKGYTYLPPTNCVLTCPMPNYTKTQWKRVYDMAKTLSSISFICACYNILTFGILNRKRKSKYNICITLMSTSIALVYLTDIIKFGYGIEEFLCPEPGRSAVQNDAACGITGAMFHFGITYCCCWAMTMSIVLFCSVKRIKLFYFRHFMIGNTIFTIITTVILLSAKKMVAGTGYIECWVRERWFVITLFWLPCGIGLSIGIFCIGGVIHEIYNISKKVNIRESEFILRQIKPFSLVFSVAGSFLYLFIFFFDVERKIDSYKAAVADYVLCLLSGGSEETCFTTGPNYASFFIFYFFIRVFGVLFFSIYGTSRVARDIWSEVVFDEVRSRLSQSESGISRNNSRTDISFGKNNNSKNSNNSKNSNNSKNSNNSDNDSKSIELEKK</sequence>
<gene>
    <name type="primary">fslE</name>
    <name type="ORF">DDB_G0288269</name>
</gene>
<keyword id="KW-1015">Disulfide bond</keyword>
<keyword id="KW-0325">Glycoprotein</keyword>
<keyword id="KW-0472">Membrane</keyword>
<keyword id="KW-0675">Receptor</keyword>
<keyword id="KW-1185">Reference proteome</keyword>
<keyword id="KW-0732">Signal</keyword>
<keyword id="KW-0812">Transmembrane</keyword>
<keyword id="KW-1133">Transmembrane helix</keyword>
<organism>
    <name type="scientific">Dictyostelium discoideum</name>
    <name type="common">Social amoeba</name>
    <dbReference type="NCBI Taxonomy" id="44689"/>
    <lineage>
        <taxon>Eukaryota</taxon>
        <taxon>Amoebozoa</taxon>
        <taxon>Evosea</taxon>
        <taxon>Eumycetozoa</taxon>
        <taxon>Dictyostelia</taxon>
        <taxon>Dictyosteliales</taxon>
        <taxon>Dictyosteliaceae</taxon>
        <taxon>Dictyostelium</taxon>
    </lineage>
</organism>
<protein>
    <recommendedName>
        <fullName>Frizzled and smoothened-like protein E</fullName>
    </recommendedName>
</protein>
<name>FSLE_DICDI</name>
<comment type="subcellular location">
    <subcellularLocation>
        <location evidence="4">Membrane</location>
        <topology evidence="4">Multi-pass membrane protein</topology>
    </subcellularLocation>
</comment>
<comment type="similarity">
    <text evidence="4">Belongs to the G-protein coupled receptor Fz/Smo family.</text>
</comment>
<proteinExistence type="inferred from homology"/>
<evidence type="ECO:0000250" key="1"/>
<evidence type="ECO:0000255" key="2"/>
<evidence type="ECO:0000256" key="3">
    <source>
        <dbReference type="SAM" id="MobiDB-lite"/>
    </source>
</evidence>
<evidence type="ECO:0000305" key="4"/>
<feature type="signal peptide" evidence="2">
    <location>
        <begin position="1"/>
        <end position="20"/>
    </location>
</feature>
<feature type="chain" id="PRO_0000371367" description="Frizzled and smoothened-like protein E">
    <location>
        <begin position="21"/>
        <end position="609"/>
    </location>
</feature>
<feature type="topological domain" description="Extracellular" evidence="2">
    <location>
        <begin position="21"/>
        <end position="259"/>
    </location>
</feature>
<feature type="transmembrane region" description="Helical; Name=1" evidence="2">
    <location>
        <begin position="260"/>
        <end position="280"/>
    </location>
</feature>
<feature type="topological domain" description="Cytoplasmic" evidence="2">
    <location>
        <begin position="281"/>
        <end position="288"/>
    </location>
</feature>
<feature type="transmembrane region" description="Helical; Name=2" evidence="2">
    <location>
        <begin position="289"/>
        <end position="309"/>
    </location>
</feature>
<feature type="topological domain" description="Extracellular" evidence="2">
    <location>
        <begin position="310"/>
        <end position="337"/>
    </location>
</feature>
<feature type="transmembrane region" description="Helical; Name=3" evidence="2">
    <location>
        <begin position="338"/>
        <end position="358"/>
    </location>
</feature>
<feature type="topological domain" description="Cytoplasmic" evidence="2">
    <location>
        <begin position="359"/>
        <end position="365"/>
    </location>
</feature>
<feature type="transmembrane region" description="Helical; Name=4" evidence="2">
    <location>
        <begin position="366"/>
        <end position="386"/>
    </location>
</feature>
<feature type="topological domain" description="Extracellular" evidence="2">
    <location>
        <begin position="387"/>
        <end position="408"/>
    </location>
</feature>
<feature type="transmembrane region" description="Helical; Name=5" evidence="2">
    <location>
        <begin position="409"/>
        <end position="429"/>
    </location>
</feature>
<feature type="topological domain" description="Cytoplasmic" evidence="2">
    <location>
        <begin position="430"/>
        <end position="457"/>
    </location>
</feature>
<feature type="transmembrane region" description="Helical; Name=6" evidence="2">
    <location>
        <begin position="458"/>
        <end position="478"/>
    </location>
</feature>
<feature type="topological domain" description="Extracellular" evidence="2">
    <location>
        <begin position="479"/>
        <end position="511"/>
    </location>
</feature>
<feature type="transmembrane region" description="Helical; Name=7" evidence="2">
    <location>
        <begin position="512"/>
        <end position="532"/>
    </location>
</feature>
<feature type="topological domain" description="Cytoplasmic" evidence="2">
    <location>
        <begin position="533"/>
        <end position="609"/>
    </location>
</feature>
<feature type="domain" description="FZ">
    <location>
        <begin position="35"/>
        <end position="192"/>
    </location>
</feature>
<feature type="region of interest" description="Disordered" evidence="3">
    <location>
        <begin position="559"/>
        <end position="609"/>
    </location>
</feature>
<feature type="compositionally biased region" description="Polar residues" evidence="3">
    <location>
        <begin position="559"/>
        <end position="570"/>
    </location>
</feature>
<feature type="compositionally biased region" description="Low complexity" evidence="3">
    <location>
        <begin position="575"/>
        <end position="598"/>
    </location>
</feature>
<feature type="compositionally biased region" description="Basic and acidic residues" evidence="3">
    <location>
        <begin position="599"/>
        <end position="609"/>
    </location>
</feature>
<feature type="glycosylation site" description="N-linked (GlcNAc...) asparagine" evidence="2">
    <location>
        <position position="75"/>
    </location>
</feature>
<feature type="glycosylation site" description="N-linked (GlcNAc...) asparagine" evidence="2">
    <location>
        <position position="130"/>
    </location>
</feature>
<feature type="glycosylation site" description="N-linked (GlcNAc...) asparagine" evidence="2">
    <location>
        <position position="172"/>
    </location>
</feature>
<feature type="glycosylation site" description="N-linked (GlcNAc...) asparagine" evidence="2">
    <location>
        <position position="198"/>
    </location>
</feature>
<feature type="glycosylation site" description="N-linked (GlcNAc...) asparagine" evidence="2">
    <location>
        <position position="217"/>
    </location>
</feature>
<feature type="glycosylation site" description="N-linked (GlcNAc...) asparagine" evidence="2">
    <location>
        <position position="245"/>
    </location>
</feature>
<feature type="disulfide bond" evidence="1">
    <location>
        <begin position="40"/>
        <end position="118"/>
    </location>
</feature>
<feature type="disulfide bond" evidence="1">
    <location>
        <begin position="53"/>
        <end position="111"/>
    </location>
</feature>
<feature type="disulfide bond" evidence="1">
    <location>
        <begin position="100"/>
        <end position="149"/>
    </location>
</feature>
<feature type="disulfide bond" evidence="1">
    <location>
        <begin position="138"/>
        <end position="189"/>
    </location>
</feature>
<dbReference type="EMBL" id="AAFI02000109">
    <property type="protein sequence ID" value="EAL63316.1"/>
    <property type="molecule type" value="Genomic_DNA"/>
</dbReference>
<dbReference type="RefSeq" id="XP_636809.1">
    <property type="nucleotide sequence ID" value="XM_631717.1"/>
</dbReference>
<dbReference type="FunCoup" id="Q54J78">
    <property type="interactions" value="19"/>
</dbReference>
<dbReference type="GlyCosmos" id="Q54J78">
    <property type="glycosylation" value="6 sites, No reported glycans"/>
</dbReference>
<dbReference type="GlyGen" id="Q54J78">
    <property type="glycosylation" value="7 sites"/>
</dbReference>
<dbReference type="PaxDb" id="44689-DDB0231312"/>
<dbReference type="EnsemblProtists" id="EAL63316">
    <property type="protein sequence ID" value="EAL63316"/>
    <property type="gene ID" value="DDB_G0288269"/>
</dbReference>
<dbReference type="GeneID" id="8626526"/>
<dbReference type="KEGG" id="ddi:DDB_G0288269"/>
<dbReference type="dictyBase" id="DDB_G0288269">
    <property type="gene designation" value="fslE"/>
</dbReference>
<dbReference type="VEuPathDB" id="AmoebaDB:DDB_G0288269"/>
<dbReference type="eggNOG" id="ENOG502T166">
    <property type="taxonomic scope" value="Eukaryota"/>
</dbReference>
<dbReference type="HOGENOM" id="CLU_030318_0_0_1"/>
<dbReference type="InParanoid" id="Q54J78"/>
<dbReference type="OMA" id="NICITLM"/>
<dbReference type="PhylomeDB" id="Q54J78"/>
<dbReference type="PRO" id="PR:Q54J78"/>
<dbReference type="Proteomes" id="UP000002195">
    <property type="component" value="Chromosome 5"/>
</dbReference>
<dbReference type="GO" id="GO:0016020">
    <property type="term" value="C:membrane"/>
    <property type="evidence" value="ECO:0007669"/>
    <property type="project" value="UniProtKB-SubCell"/>
</dbReference>
<dbReference type="Gene3D" id="1.20.1070.10">
    <property type="entry name" value="Rhodopsin 7-helix transmembrane proteins"/>
    <property type="match status" value="1"/>
</dbReference>
<dbReference type="InterPro" id="IPR050949">
    <property type="entry name" value="GPCR_Fz/Smo-like"/>
</dbReference>
<dbReference type="PANTHER" id="PTHR31787:SF1">
    <property type="entry name" value="FRIZZLED AND SMOOTHENED-LIKE PROTEIN B-RELATED"/>
    <property type="match status" value="1"/>
</dbReference>
<dbReference type="PANTHER" id="PTHR31787">
    <property type="entry name" value="G-PROTEIN-COUPLED RECEPTOR GPCR FAMILY PROTEIN"/>
    <property type="match status" value="1"/>
</dbReference>
<accession>Q54J78</accession>
<reference key="1">
    <citation type="journal article" date="2005" name="Nature">
        <title>The genome of the social amoeba Dictyostelium discoideum.</title>
        <authorList>
            <person name="Eichinger L."/>
            <person name="Pachebat J.A."/>
            <person name="Gloeckner G."/>
            <person name="Rajandream M.A."/>
            <person name="Sucgang R."/>
            <person name="Berriman M."/>
            <person name="Song J."/>
            <person name="Olsen R."/>
            <person name="Szafranski K."/>
            <person name="Xu Q."/>
            <person name="Tunggal B."/>
            <person name="Kummerfeld S."/>
            <person name="Madera M."/>
            <person name="Konfortov B.A."/>
            <person name="Rivero F."/>
            <person name="Bankier A.T."/>
            <person name="Lehmann R."/>
            <person name="Hamlin N."/>
            <person name="Davies R."/>
            <person name="Gaudet P."/>
            <person name="Fey P."/>
            <person name="Pilcher K."/>
            <person name="Chen G."/>
            <person name="Saunders D."/>
            <person name="Sodergren E.J."/>
            <person name="Davis P."/>
            <person name="Kerhornou A."/>
            <person name="Nie X."/>
            <person name="Hall N."/>
            <person name="Anjard C."/>
            <person name="Hemphill L."/>
            <person name="Bason N."/>
            <person name="Farbrother P."/>
            <person name="Desany B."/>
            <person name="Just E."/>
            <person name="Morio T."/>
            <person name="Rost R."/>
            <person name="Churcher C.M."/>
            <person name="Cooper J."/>
            <person name="Haydock S."/>
            <person name="van Driessche N."/>
            <person name="Cronin A."/>
            <person name="Goodhead I."/>
            <person name="Muzny D.M."/>
            <person name="Mourier T."/>
            <person name="Pain A."/>
            <person name="Lu M."/>
            <person name="Harper D."/>
            <person name="Lindsay R."/>
            <person name="Hauser H."/>
            <person name="James K.D."/>
            <person name="Quiles M."/>
            <person name="Madan Babu M."/>
            <person name="Saito T."/>
            <person name="Buchrieser C."/>
            <person name="Wardroper A."/>
            <person name="Felder M."/>
            <person name="Thangavelu M."/>
            <person name="Johnson D."/>
            <person name="Knights A."/>
            <person name="Loulseged H."/>
            <person name="Mungall K.L."/>
            <person name="Oliver K."/>
            <person name="Price C."/>
            <person name="Quail M.A."/>
            <person name="Urushihara H."/>
            <person name="Hernandez J."/>
            <person name="Rabbinowitsch E."/>
            <person name="Steffen D."/>
            <person name="Sanders M."/>
            <person name="Ma J."/>
            <person name="Kohara Y."/>
            <person name="Sharp S."/>
            <person name="Simmonds M.N."/>
            <person name="Spiegler S."/>
            <person name="Tivey A."/>
            <person name="Sugano S."/>
            <person name="White B."/>
            <person name="Walker D."/>
            <person name="Woodward J.R."/>
            <person name="Winckler T."/>
            <person name="Tanaka Y."/>
            <person name="Shaulsky G."/>
            <person name="Schleicher M."/>
            <person name="Weinstock G.M."/>
            <person name="Rosenthal A."/>
            <person name="Cox E.C."/>
            <person name="Chisholm R.L."/>
            <person name="Gibbs R.A."/>
            <person name="Loomis W.F."/>
            <person name="Platzer M."/>
            <person name="Kay R.R."/>
            <person name="Williams J.G."/>
            <person name="Dear P.H."/>
            <person name="Noegel A.A."/>
            <person name="Barrell B.G."/>
            <person name="Kuspa A."/>
        </authorList>
    </citation>
    <scope>NUCLEOTIDE SEQUENCE [LARGE SCALE GENOMIC DNA]</scope>
    <source>
        <strain>AX4</strain>
    </source>
</reference>
<reference key="2">
    <citation type="journal article" date="2006" name="Eur. J. Cell Biol.">
        <title>The Dictyostelium repertoire of seven transmembrane domain receptors.</title>
        <authorList>
            <person name="Prabhu Y."/>
            <person name="Eichinger L."/>
        </authorList>
    </citation>
    <scope>NOMENCLATURE</scope>
</reference>